<gene>
    <name type="primary">F</name>
</gene>
<reference key="1">
    <citation type="journal article" date="1990" name="Virology">
        <title>Antigenic and structural properties of a paramyxovirus simian virus 41 (SV41) reveal a close relationship with human parainfluenza type 2 virus.</title>
        <authorList>
            <person name="Tsurudome M."/>
            <person name="Bando H."/>
            <person name="Nishio M."/>
            <person name="Iwamoto Y."/>
            <person name="Kawano M."/>
            <person name="Kondo K."/>
            <person name="Komada H."/>
            <person name="Ito Y."/>
        </authorList>
    </citation>
    <scope>NUCLEOTIDE SEQUENCE</scope>
    <source>
        <strain>Toshiba/Chanock</strain>
    </source>
</reference>
<reference key="2">
    <citation type="journal article" date="1991" name="Virology">
        <title>Transcripts of simian virus 41 (SV41) matrix gene are exclusively dicistronic with the fusion gene which is also transcribed as a monocistron.</title>
        <authorList>
            <person name="Tsurudome M."/>
            <person name="Bando H."/>
            <person name="Kawano M."/>
            <person name="Matsumura H."/>
            <person name="Komada H."/>
            <person name="Nishio M."/>
            <person name="Ito Y."/>
        </authorList>
    </citation>
    <scope>NUCLEOTIDE SEQUENCE</scope>
    <source>
        <strain>Toshiba/Chanock</strain>
    </source>
</reference>
<comment type="function">
    <text evidence="1">Class I viral fusion protein. Under the current model, the protein has at least 3 conformational states: pre-fusion native state, pre-hairpin intermediate state, and post-fusion hairpin state. During viral and plasma cell membrane fusion, the heptad repeat (HR) regions assume a trimer-of-hairpins structure, positioning the fusion peptide in close proximity to the C-terminal region of the ectodomain. The formation of this structure appears to drive apposition and subsequent fusion of viral and plasma cell membranes. Directs fusion of viral and cellular membranes leading to delivery of the nucleocapsid into the cytoplasm. This fusion is pH independent and occurs directly at the outer cell membrane. The trimer of F1-F2 (F protein) probably interacts with HN at the virion surface. Upon HN binding to its cellular receptor, the hydrophobic fusion peptide is unmasked and interacts with the cellular membrane, inducing the fusion between cell and virion membranes. Later in infection, F proteins expressed at the plasma membrane of infected cells could mediate fusion with adjacent cells to form syncytia, a cytopathic effect that could lead to tissue necrosis (By similarity).</text>
</comment>
<comment type="subunit">
    <text evidence="1">Homotrimer of disulfide-linked F1-F2.</text>
</comment>
<comment type="subcellular location">
    <subcellularLocation>
        <location evidence="1">Virion membrane</location>
        <topology evidence="1">Single-pass type I membrane protein</topology>
    </subcellularLocation>
    <subcellularLocation>
        <location evidence="1">Host cell membrane</location>
        <topology evidence="1">Single-pass membrane protein</topology>
    </subcellularLocation>
</comment>
<comment type="PTM">
    <text evidence="1">The inactive precursor F0 is glycosylated and proteolytically cleaved into F1 and F2 to be functionally active. The cleavage is mediated by cellular proteases during the transport and maturation of the polypeptide (By similarity).</text>
</comment>
<comment type="similarity">
    <text evidence="3">Belongs to the paramyxoviruses fusion glycoprotein family.</text>
</comment>
<keyword id="KW-0165">Cleavage on pair of basic residues</keyword>
<keyword id="KW-0175">Coiled coil</keyword>
<keyword id="KW-1015">Disulfide bond</keyword>
<keyword id="KW-1169">Fusion of virus membrane with host cell membrane</keyword>
<keyword id="KW-1168">Fusion of virus membrane with host membrane</keyword>
<keyword id="KW-0325">Glycoprotein</keyword>
<keyword id="KW-1032">Host cell membrane</keyword>
<keyword id="KW-1043">Host membrane</keyword>
<keyword id="KW-0472">Membrane</keyword>
<keyword id="KW-1185">Reference proteome</keyword>
<keyword id="KW-0732">Signal</keyword>
<keyword id="KW-0812">Transmembrane</keyword>
<keyword id="KW-1133">Transmembrane helix</keyword>
<keyword id="KW-0261">Viral envelope protein</keyword>
<keyword id="KW-1162">Viral penetration into host cytoplasm</keyword>
<keyword id="KW-0946">Virion</keyword>
<keyword id="KW-1160">Virus entry into host cell</keyword>
<feature type="signal peptide" evidence="2">
    <location>
        <begin position="1"/>
        <end position="26"/>
    </location>
</feature>
<feature type="chain" id="PRO_0000039381" description="Fusion glycoprotein F0">
    <location>
        <begin position="27"/>
        <end position="561"/>
    </location>
</feature>
<feature type="chain" id="PRO_0000039382" description="Fusion glycoprotein F2">
    <location>
        <begin position="27"/>
        <end position="109"/>
    </location>
</feature>
<feature type="chain" id="PRO_0000039383" description="Fusion glycoprotein F1">
    <location>
        <begin position="110"/>
        <end position="561"/>
    </location>
</feature>
<feature type="topological domain" description="Extracellular" evidence="1">
    <location>
        <begin position="27"/>
        <end position="495"/>
    </location>
</feature>
<feature type="transmembrane region" description="Helical" evidence="1">
    <location>
        <begin position="496"/>
        <end position="516"/>
    </location>
</feature>
<feature type="topological domain" description="Cytoplasmic" evidence="1">
    <location>
        <begin position="517"/>
        <end position="561"/>
    </location>
</feature>
<feature type="region of interest" description="Fusion peptide" evidence="1">
    <location>
        <begin position="110"/>
        <end position="134"/>
    </location>
</feature>
<feature type="coiled-coil region" evidence="2">
    <location>
        <begin position="135"/>
        <end position="163"/>
    </location>
</feature>
<feature type="coiled-coil region" evidence="2">
    <location>
        <begin position="459"/>
        <end position="484"/>
    </location>
</feature>
<feature type="site" description="Cleavage; by host" evidence="1">
    <location>
        <begin position="109"/>
        <end position="110"/>
    </location>
</feature>
<feature type="glycosylation site" description="N-linked (GlcNAc...) asparagine; by host" evidence="2">
    <location>
        <position position="72"/>
    </location>
</feature>
<feature type="glycosylation site" description="N-linked (GlcNAc...) asparagine; by host" evidence="2">
    <location>
        <position position="80"/>
    </location>
</feature>
<feature type="glycosylation site" description="N-linked (GlcNAc...) asparagine; by host" evidence="2">
    <location>
        <position position="359"/>
    </location>
</feature>
<feature type="glycosylation site" description="N-linked (GlcNAc...) asparagine; by host" evidence="2">
    <location>
        <position position="434"/>
    </location>
</feature>
<feature type="glycosylation site" description="N-linked (GlcNAc...) asparagine; by host" evidence="2">
    <location>
        <position position="440"/>
    </location>
</feature>
<feature type="glycosylation site" description="N-linked (GlcNAc...) asparagine; by host" evidence="2">
    <location>
        <position position="464"/>
    </location>
</feature>
<feature type="disulfide bond" description="Interchain (between F2 and F1 chains)" evidence="1">
    <location>
        <begin position="71"/>
        <end position="192"/>
    </location>
</feature>
<feature type="disulfide bond" evidence="1">
    <location>
        <begin position="331"/>
        <end position="340"/>
    </location>
</feature>
<feature type="disulfide bond" evidence="1">
    <location>
        <begin position="355"/>
        <end position="363"/>
    </location>
</feature>
<feature type="disulfide bond" evidence="1">
    <location>
        <begin position="387"/>
        <end position="392"/>
    </location>
</feature>
<feature type="disulfide bond" evidence="1">
    <location>
        <begin position="394"/>
        <end position="417"/>
    </location>
</feature>
<sequence length="561" mass="59819">MRLTPYPIALTTLMIALTTLPETGLGIARDALSQVGVIQSKARSLMYYSDGSSSFIVVKLLPTLPTPSGNCNLTSITAYNTTLFKLLTPLMENLDTIVSANQAGSRRKRFAGVVVGLAALGVATAAQVTAAVAVVKANANAAAINKLAASIQSTNAAISDVISSTRTLATAIQAVQDHVNGVLASGLTEANCRSQDALIGSILNLYLTELTTIFHNQIVNPALTPLSIQALRIILGSTLPLIVESRWNTNLNTAELLSSGLLTGQIISISPSYMQMVIQITVPTFVMQPGAKIIDLVTITANRMEEEVLIQVPPRILEYANEIQAYTADDCVVTPHAVFCKYNDGSPISDSLYQCLKGNLTSCVFTPVVGNYLKRFAFANGVMYVNCKALLCRCADPPMVITQDDLAGITVIDITVCREVMLDTLAFKITSLNNVTYGANFSMLAAAIKDLSPLDLSAQLAQVNKSLASAEEKIAQSSSLAAQAVSQEATITVGSVAMLIAVLALIAGCTGIMIAVQMSRRLEVLRHLTDQSIISNHHYAELNPPPYNHSYESLHPIPQSH</sequence>
<accession>P25181</accession>
<proteinExistence type="evidence at transcript level"/>
<organismHost>
    <name type="scientific">Simiiformes</name>
    <dbReference type="NCBI Taxonomy" id="314293"/>
</organismHost>
<organism>
    <name type="scientific">Simian virus 41</name>
    <name type="common">SV41</name>
    <dbReference type="NCBI Taxonomy" id="3052561"/>
    <lineage>
        <taxon>Viruses</taxon>
        <taxon>Riboviria</taxon>
        <taxon>Orthornavirae</taxon>
        <taxon>Negarnaviricota</taxon>
        <taxon>Haploviricotina</taxon>
        <taxon>Monjiviricetes</taxon>
        <taxon>Mononegavirales</taxon>
        <taxon>Paramyxoviridae</taxon>
        <taxon>Rubulavirinae</taxon>
        <taxon>Orthorubulavirus</taxon>
    </lineage>
</organism>
<evidence type="ECO:0000250" key="1"/>
<evidence type="ECO:0000255" key="2"/>
<evidence type="ECO:0000305" key="3"/>
<name>FUS_SV41</name>
<dbReference type="EMBL" id="S48627">
    <property type="protein sequence ID" value="AAB19494.1"/>
    <property type="molecule type" value="mRNA"/>
</dbReference>
<dbReference type="EMBL" id="X64275">
    <property type="protein sequence ID" value="CAA45567.1"/>
    <property type="molecule type" value="Genomic_RNA"/>
</dbReference>
<dbReference type="EMBL" id="M62733">
    <property type="status" value="NOT_ANNOTATED_CDS"/>
    <property type="molecule type" value="Genomic_RNA"/>
</dbReference>
<dbReference type="PIR" id="B40563">
    <property type="entry name" value="VGNZ41"/>
</dbReference>
<dbReference type="SMR" id="P25181"/>
<dbReference type="GlyCosmos" id="P25181">
    <property type="glycosylation" value="6 sites, No reported glycans"/>
</dbReference>
<dbReference type="KEGG" id="vg:3159465"/>
<dbReference type="OrthoDB" id="2687at10239"/>
<dbReference type="Proteomes" id="UP000108270">
    <property type="component" value="Segment"/>
</dbReference>
<dbReference type="GO" id="GO:0020002">
    <property type="term" value="C:host cell plasma membrane"/>
    <property type="evidence" value="ECO:0007669"/>
    <property type="project" value="UniProtKB-SubCell"/>
</dbReference>
<dbReference type="GO" id="GO:0016020">
    <property type="term" value="C:membrane"/>
    <property type="evidence" value="ECO:0007669"/>
    <property type="project" value="UniProtKB-KW"/>
</dbReference>
<dbReference type="GO" id="GO:0019031">
    <property type="term" value="C:viral envelope"/>
    <property type="evidence" value="ECO:0007669"/>
    <property type="project" value="UniProtKB-KW"/>
</dbReference>
<dbReference type="GO" id="GO:0055036">
    <property type="term" value="C:virion membrane"/>
    <property type="evidence" value="ECO:0007669"/>
    <property type="project" value="UniProtKB-SubCell"/>
</dbReference>
<dbReference type="GO" id="GO:0019064">
    <property type="term" value="P:fusion of virus membrane with host plasma membrane"/>
    <property type="evidence" value="ECO:0007669"/>
    <property type="project" value="UniProtKB-KW"/>
</dbReference>
<dbReference type="GO" id="GO:0046718">
    <property type="term" value="P:symbiont entry into host cell"/>
    <property type="evidence" value="ECO:0007669"/>
    <property type="project" value="UniProtKB-KW"/>
</dbReference>
<dbReference type="Gene3D" id="1.10.287.2480">
    <property type="match status" value="1"/>
</dbReference>
<dbReference type="Gene3D" id="6.10.10.110">
    <property type="match status" value="1"/>
</dbReference>
<dbReference type="Gene3D" id="2.60.40.1690">
    <property type="entry name" value="Head and neck region of the ectodomain of NDV fusion glycoprotein"/>
    <property type="match status" value="1"/>
</dbReference>
<dbReference type="Gene3D" id="2.40.490.10">
    <property type="entry name" value="Newcastle disease virus like domain"/>
    <property type="match status" value="1"/>
</dbReference>
<dbReference type="InterPro" id="IPR000776">
    <property type="entry name" value="Fusion_F0_Paramyxovir"/>
</dbReference>
<dbReference type="Pfam" id="PF00523">
    <property type="entry name" value="Fusion_gly"/>
    <property type="match status" value="1"/>
</dbReference>
<dbReference type="SUPFAM" id="SSF69922">
    <property type="entry name" value="Head and neck region of the ectodomain of NDV fusion glycoprotein"/>
    <property type="match status" value="1"/>
</dbReference>
<dbReference type="SUPFAM" id="SSF58069">
    <property type="entry name" value="Virus ectodomain"/>
    <property type="match status" value="1"/>
</dbReference>
<protein>
    <recommendedName>
        <fullName>Fusion glycoprotein F0</fullName>
    </recommendedName>
    <component>
        <recommendedName>
            <fullName>Fusion glycoprotein F2</fullName>
        </recommendedName>
    </component>
    <component>
        <recommendedName>
            <fullName>Fusion glycoprotein F1</fullName>
        </recommendedName>
    </component>
</protein>